<keyword id="KW-0031">Aminopeptidase</keyword>
<keyword id="KW-0963">Cytoplasm</keyword>
<keyword id="KW-0378">Hydrolase</keyword>
<keyword id="KW-0645">Protease</keyword>
<keyword id="KW-0720">Serine protease</keyword>
<sequence length="763" mass="87697">MRFNHFSIVDKNFDEQLAELDQLGFRWSVFWDEKKILKDFLIQSPSDMTALQATAELDVIEFLKSSIELDWEIFWNIALQLLDFVPNFDFEIGKAFEYAKNSNLPQIEAEMTTENIISAFYYLLCTRRKTGMILVEHWVSEGLLPLDNHYHFFNDKSLATFDSSLLEREVLWVESPVDSEQRGENDLIKIQIIRPKSTEKLPVVMTASPYHLGINDKANDLALHDMNVELEEKTSHEIHVEQKLPQKLSAKAKELPIVDKAPYRFTHGWTYSLNDYFLTRGFASIYVAGVGTRSSDGFQTSGDYQQIYSMTAVIDWLNGRARAYTSRKKTHEIKASWANGKVAMTGKSYLGTMAYGAATTGVEGLELILAEAGISSWYNYYRENGLVRSPGGFPGEDLDVLAALTYSRNLDGADFLKGNAEYEKRLAEMTAALDRKSGDYNQFWHDRNYLINTDKVKADVLIVHGLQDWNVTPEQAYNFWKALPEGHAKHAFLHRGAHIYMNSWQSIDFSETINAYFVAKLLDRDLNLNLPPVILQENSKDQVWTMMNDFGANTQIKLPLGKTAVSFAQFDNNYDDETFKKYSKDFNVFKKDLFENKANEAVIDLELPSMLTINGPVELELRLKLNDTKGFLSAQILDFGQKKRLEDKVRVKDFKVLDRGRNFMLDDLVELPLVESPYQLVTKGFTNLQNQSLLTVSDLKADEWFTIKFELQPTIYHLEKADKLRVILYSTDFEHTVRDNRKVTYEIDLSQSKLIIPIESVKN</sequence>
<name>PEPX_LACLM</name>
<proteinExistence type="inferred from homology"/>
<comment type="function">
    <text evidence="1">Removes N-terminal dipeptides sequentially from polypeptides having unsubstituted N-termini provided that the penultimate residue is proline.</text>
</comment>
<comment type="catalytic activity">
    <reaction evidence="1">
        <text>Hydrolyzes Xaa-Pro-|- bonds to release unblocked, N-terminal dipeptides from substrates including Ala-Pro-|-p-nitroanilide and (sequentially) Tyr-Pro-|-Phe-Pro-|-Gly-Pro-|-Ile.</text>
        <dbReference type="EC" id="3.4.14.11"/>
    </reaction>
</comment>
<comment type="subunit">
    <text evidence="1">Homodimer.</text>
</comment>
<comment type="subcellular location">
    <subcellularLocation>
        <location evidence="1">Cytoplasm</location>
    </subcellularLocation>
</comment>
<comment type="similarity">
    <text evidence="1">Belongs to the peptidase S15 family.</text>
</comment>
<feature type="chain" id="PRO_1000045482" description="Xaa-Pro dipeptidyl-peptidase">
    <location>
        <begin position="1"/>
        <end position="763"/>
    </location>
</feature>
<feature type="active site" description="Charge relay system" evidence="1">
    <location>
        <position position="348"/>
    </location>
</feature>
<feature type="active site" description="Charge relay system" evidence="1">
    <location>
        <position position="468"/>
    </location>
</feature>
<feature type="active site" description="Charge relay system" evidence="1">
    <location>
        <position position="498"/>
    </location>
</feature>
<evidence type="ECO:0000255" key="1">
    <source>
        <dbReference type="HAMAP-Rule" id="MF_00698"/>
    </source>
</evidence>
<accession>A2RNK1</accession>
<protein>
    <recommendedName>
        <fullName evidence="1">Xaa-Pro dipeptidyl-peptidase</fullName>
        <ecNumber evidence="1">3.4.14.11</ecNumber>
    </recommendedName>
    <alternativeName>
        <fullName evidence="1">X-Pro dipeptidyl-peptidase</fullName>
    </alternativeName>
    <alternativeName>
        <fullName evidence="1">X-prolyl-dipeptidyl aminopeptidase</fullName>
        <shortName evidence="1">X-PDAP</shortName>
    </alternativeName>
</protein>
<reference key="1">
    <citation type="journal article" date="2007" name="J. Bacteriol.">
        <title>The complete genome sequence of the lactic acid bacterial paradigm Lactococcus lactis subsp. cremoris MG1363.</title>
        <authorList>
            <person name="Wegmann U."/>
            <person name="O'Connell-Motherway M."/>
            <person name="Zomer A."/>
            <person name="Buist G."/>
            <person name="Shearman C."/>
            <person name="Canchaya C."/>
            <person name="Ventura M."/>
            <person name="Goesmann A."/>
            <person name="Gasson M.J."/>
            <person name="Kuipers O.P."/>
            <person name="van Sinderen D."/>
            <person name="Kok J."/>
        </authorList>
    </citation>
    <scope>NUCLEOTIDE SEQUENCE [LARGE SCALE GENOMIC DNA]</scope>
    <source>
        <strain>MG1363</strain>
    </source>
</reference>
<gene>
    <name evidence="1" type="primary">pepX</name>
    <name type="ordered locus">llmg_2328</name>
</gene>
<organism>
    <name type="scientific">Lactococcus lactis subsp. cremoris (strain MG1363)</name>
    <dbReference type="NCBI Taxonomy" id="416870"/>
    <lineage>
        <taxon>Bacteria</taxon>
        <taxon>Bacillati</taxon>
        <taxon>Bacillota</taxon>
        <taxon>Bacilli</taxon>
        <taxon>Lactobacillales</taxon>
        <taxon>Streptococcaceae</taxon>
        <taxon>Lactococcus</taxon>
        <taxon>Lactococcus cremoris subsp. cremoris</taxon>
    </lineage>
</organism>
<dbReference type="EC" id="3.4.14.11" evidence="1"/>
<dbReference type="EMBL" id="AM406671">
    <property type="protein sequence ID" value="CAL98891.1"/>
    <property type="molecule type" value="Genomic_DNA"/>
</dbReference>
<dbReference type="RefSeq" id="WP_011835997.1">
    <property type="nucleotide sequence ID" value="NC_009004.1"/>
</dbReference>
<dbReference type="SMR" id="A2RNK1"/>
<dbReference type="STRING" id="416870.llmg_2328"/>
<dbReference type="ESTHER" id="lacla-pepx">
    <property type="family name" value="Lactobacillus_peptidase"/>
</dbReference>
<dbReference type="MEROPS" id="S15.001"/>
<dbReference type="KEGG" id="llm:llmg_2328"/>
<dbReference type="eggNOG" id="COG2936">
    <property type="taxonomic scope" value="Bacteria"/>
</dbReference>
<dbReference type="HOGENOM" id="CLU_011800_0_0_9"/>
<dbReference type="OrthoDB" id="319764at2"/>
<dbReference type="PhylomeDB" id="A2RNK1"/>
<dbReference type="Proteomes" id="UP000000364">
    <property type="component" value="Chromosome"/>
</dbReference>
<dbReference type="GO" id="GO:0005737">
    <property type="term" value="C:cytoplasm"/>
    <property type="evidence" value="ECO:0007669"/>
    <property type="project" value="UniProtKB-SubCell"/>
</dbReference>
<dbReference type="GO" id="GO:0004177">
    <property type="term" value="F:aminopeptidase activity"/>
    <property type="evidence" value="ECO:0007669"/>
    <property type="project" value="UniProtKB-KW"/>
</dbReference>
<dbReference type="GO" id="GO:0008239">
    <property type="term" value="F:dipeptidyl-peptidase activity"/>
    <property type="evidence" value="ECO:0007669"/>
    <property type="project" value="UniProtKB-UniRule"/>
</dbReference>
<dbReference type="GO" id="GO:0008236">
    <property type="term" value="F:serine-type peptidase activity"/>
    <property type="evidence" value="ECO:0007669"/>
    <property type="project" value="UniProtKB-KW"/>
</dbReference>
<dbReference type="GO" id="GO:0006508">
    <property type="term" value="P:proteolysis"/>
    <property type="evidence" value="ECO:0007669"/>
    <property type="project" value="UniProtKB-KW"/>
</dbReference>
<dbReference type="Gene3D" id="1.10.246.70">
    <property type="match status" value="1"/>
</dbReference>
<dbReference type="Gene3D" id="3.40.50.1820">
    <property type="entry name" value="alpha/beta hydrolase"/>
    <property type="match status" value="1"/>
</dbReference>
<dbReference type="Gene3D" id="2.60.120.260">
    <property type="entry name" value="Galactose-binding domain-like"/>
    <property type="match status" value="1"/>
</dbReference>
<dbReference type="HAMAP" id="MF_00698">
    <property type="entry name" value="Aminopeptidase_S15"/>
    <property type="match status" value="1"/>
</dbReference>
<dbReference type="InterPro" id="IPR029058">
    <property type="entry name" value="AB_hydrolase_fold"/>
</dbReference>
<dbReference type="InterPro" id="IPR008979">
    <property type="entry name" value="Galactose-bd-like_sf"/>
</dbReference>
<dbReference type="InterPro" id="IPR008252">
    <property type="entry name" value="Pept_S15_Xpro"/>
</dbReference>
<dbReference type="InterPro" id="IPR015251">
    <property type="entry name" value="PepX_N_dom"/>
</dbReference>
<dbReference type="InterPro" id="IPR036313">
    <property type="entry name" value="PepX_N_dom_sf"/>
</dbReference>
<dbReference type="InterPro" id="IPR000383">
    <property type="entry name" value="Xaa-Pro-like_dom"/>
</dbReference>
<dbReference type="InterPro" id="IPR013736">
    <property type="entry name" value="Xaa-Pro_dipept_C"/>
</dbReference>
<dbReference type="InterPro" id="IPR050585">
    <property type="entry name" value="Xaa-Pro_dipeptidyl-ppase/CocE"/>
</dbReference>
<dbReference type="NCBIfam" id="NF003783">
    <property type="entry name" value="PRK05371.1-4"/>
    <property type="match status" value="1"/>
</dbReference>
<dbReference type="PANTHER" id="PTHR43056:SF10">
    <property type="entry name" value="COCE_NOND FAMILY, PUTATIVE (AFU_ORTHOLOGUE AFUA_7G00600)-RELATED"/>
    <property type="match status" value="1"/>
</dbReference>
<dbReference type="PANTHER" id="PTHR43056">
    <property type="entry name" value="PEPTIDASE S9 PROLYL OLIGOPEPTIDASE"/>
    <property type="match status" value="1"/>
</dbReference>
<dbReference type="Pfam" id="PF02129">
    <property type="entry name" value="Peptidase_S15"/>
    <property type="match status" value="1"/>
</dbReference>
<dbReference type="Pfam" id="PF08530">
    <property type="entry name" value="PepX_C"/>
    <property type="match status" value="1"/>
</dbReference>
<dbReference type="Pfam" id="PF09168">
    <property type="entry name" value="PepX_N"/>
    <property type="match status" value="1"/>
</dbReference>
<dbReference type="PRINTS" id="PR00923">
    <property type="entry name" value="LACTOPTASE"/>
</dbReference>
<dbReference type="SMART" id="SM00939">
    <property type="entry name" value="PepX_C"/>
    <property type="match status" value="1"/>
</dbReference>
<dbReference type="SMART" id="SM00940">
    <property type="entry name" value="PepX_N"/>
    <property type="match status" value="1"/>
</dbReference>
<dbReference type="SUPFAM" id="SSF53474">
    <property type="entry name" value="alpha/beta-Hydrolases"/>
    <property type="match status" value="1"/>
</dbReference>
<dbReference type="SUPFAM" id="SSF49785">
    <property type="entry name" value="Galactose-binding domain-like"/>
    <property type="match status" value="1"/>
</dbReference>
<dbReference type="SUPFAM" id="SSF81761">
    <property type="entry name" value="X-Prolyl dipeptidyl aminopeptidase PepX, N-terminal domain"/>
    <property type="match status" value="1"/>
</dbReference>